<keyword id="KW-0238">DNA-binding</keyword>
<keyword id="KW-1185">Reference proteome</keyword>
<keyword id="KW-0804">Transcription</keyword>
<keyword id="KW-0805">Transcription regulation</keyword>
<evidence type="ECO:0000250" key="1"/>
<evidence type="ECO:0000250" key="2">
    <source>
        <dbReference type="UniProtKB" id="P64467"/>
    </source>
</evidence>
<evidence type="ECO:0000305" key="3"/>
<protein>
    <recommendedName>
        <fullName>OriC-binding nucleoid-associated protein</fullName>
    </recommendedName>
    <alternativeName>
        <fullName>H-NS/StpA-binding protein 2</fullName>
    </alternativeName>
    <alternativeName>
        <fullName>Transcription modulator YdgT</fullName>
    </alternativeName>
</protein>
<sequence length="71" mass="8417">MTVQDYLLKFRKISSLESLEKLYDHLNYTLTDDQELINMYRAADHRRAELVSGGRLFDLGQVPKSVWHYVQ</sequence>
<gene>
    <name type="primary">cnu</name>
    <name type="synonym">ydgT</name>
    <name type="ordered locus">c2017</name>
</gene>
<accession>P64468</accession>
<accession>P76179</accession>
<name>CNU_ECOL6</name>
<comment type="function">
    <text evidence="2">Modifies the set of genes regulated by H-NS; Hha and cnu (YdgT) increase the number of genes bound by H-NS/StpA and may also modulate the oligomerization of the H-NS/StpA-complex on DNA. The complex formed with H-NS binds to the specific 26-bp cnb site in the origin of replication oriC.</text>
</comment>
<comment type="subunit">
    <text evidence="2">Forms complexes with both H-NS and StpA.</text>
</comment>
<comment type="similarity">
    <text evidence="3">Belongs to the Hha/YmoA/Cnu family.</text>
</comment>
<dbReference type="EMBL" id="AE014075">
    <property type="protein sequence ID" value="AAN80477.1"/>
    <property type="molecule type" value="Genomic_DNA"/>
</dbReference>
<dbReference type="RefSeq" id="WP_000217950.1">
    <property type="nucleotide sequence ID" value="NZ_CP051263.1"/>
</dbReference>
<dbReference type="SMR" id="P64468"/>
<dbReference type="STRING" id="199310.c2017"/>
<dbReference type="GeneID" id="93775777"/>
<dbReference type="KEGG" id="ecc:c2017"/>
<dbReference type="eggNOG" id="ENOG5032S5U">
    <property type="taxonomic scope" value="Bacteria"/>
</dbReference>
<dbReference type="HOGENOM" id="CLU_190629_0_0_6"/>
<dbReference type="BioCyc" id="ECOL199310:C2017-MONOMER"/>
<dbReference type="Proteomes" id="UP000001410">
    <property type="component" value="Chromosome"/>
</dbReference>
<dbReference type="GO" id="GO:0003677">
    <property type="term" value="F:DNA binding"/>
    <property type="evidence" value="ECO:0007669"/>
    <property type="project" value="UniProtKB-KW"/>
</dbReference>
<dbReference type="FunFam" id="1.20.1280.40:FF:000002">
    <property type="entry name" value="OriC-binding nucleoid-associated protein"/>
    <property type="match status" value="1"/>
</dbReference>
<dbReference type="Gene3D" id="1.20.1280.40">
    <property type="entry name" value="HHA"/>
    <property type="match status" value="1"/>
</dbReference>
<dbReference type="InterPro" id="IPR007985">
    <property type="entry name" value="Hemolysn_expr_modulating_HHA"/>
</dbReference>
<dbReference type="InterPro" id="IPR036666">
    <property type="entry name" value="HHA_sf"/>
</dbReference>
<dbReference type="NCBIfam" id="NF007703">
    <property type="entry name" value="PRK10391.1"/>
    <property type="match status" value="1"/>
</dbReference>
<dbReference type="Pfam" id="PF05321">
    <property type="entry name" value="HHA"/>
    <property type="match status" value="1"/>
</dbReference>
<dbReference type="SUPFAM" id="SSF68989">
    <property type="entry name" value="Hemolysin expression modulating protein HHA"/>
    <property type="match status" value="1"/>
</dbReference>
<organism>
    <name type="scientific">Escherichia coli O6:H1 (strain CFT073 / ATCC 700928 / UPEC)</name>
    <dbReference type="NCBI Taxonomy" id="199310"/>
    <lineage>
        <taxon>Bacteria</taxon>
        <taxon>Pseudomonadati</taxon>
        <taxon>Pseudomonadota</taxon>
        <taxon>Gammaproteobacteria</taxon>
        <taxon>Enterobacterales</taxon>
        <taxon>Enterobacteriaceae</taxon>
        <taxon>Escherichia</taxon>
    </lineage>
</organism>
<feature type="chain" id="PRO_0000201734" description="OriC-binding nucleoid-associated protein">
    <location>
        <begin position="1"/>
        <end position="71"/>
    </location>
</feature>
<feature type="site" description="Interacts with H-NS" evidence="1">
    <location>
        <position position="44"/>
    </location>
</feature>
<proteinExistence type="inferred from homology"/>
<reference key="1">
    <citation type="journal article" date="2002" name="Proc. Natl. Acad. Sci. U.S.A.">
        <title>Extensive mosaic structure revealed by the complete genome sequence of uropathogenic Escherichia coli.</title>
        <authorList>
            <person name="Welch R.A."/>
            <person name="Burland V."/>
            <person name="Plunkett G. III"/>
            <person name="Redford P."/>
            <person name="Roesch P."/>
            <person name="Rasko D."/>
            <person name="Buckles E.L."/>
            <person name="Liou S.-R."/>
            <person name="Boutin A."/>
            <person name="Hackett J."/>
            <person name="Stroud D."/>
            <person name="Mayhew G.F."/>
            <person name="Rose D.J."/>
            <person name="Zhou S."/>
            <person name="Schwartz D.C."/>
            <person name="Perna N.T."/>
            <person name="Mobley H.L.T."/>
            <person name="Donnenberg M.S."/>
            <person name="Blattner F.R."/>
        </authorList>
    </citation>
    <scope>NUCLEOTIDE SEQUENCE [LARGE SCALE GENOMIC DNA]</scope>
    <source>
        <strain>CFT073 / ATCC 700928 / UPEC</strain>
    </source>
</reference>